<name>CD3E_FELCA</name>
<dbReference type="EMBL" id="AB195838">
    <property type="protein sequence ID" value="BAD74053.1"/>
    <property type="molecule type" value="mRNA"/>
</dbReference>
<dbReference type="EMBL" id="AB195839">
    <property type="protein sequence ID" value="BAD74054.1"/>
    <property type="molecule type" value="mRNA"/>
</dbReference>
<dbReference type="EMBL" id="AB195840">
    <property type="protein sequence ID" value="BAD74055.1"/>
    <property type="molecule type" value="mRNA"/>
</dbReference>
<dbReference type="RefSeq" id="NP_001009862.1">
    <property type="nucleotide sequence ID" value="NM_001009862.1"/>
</dbReference>
<dbReference type="SMR" id="Q5R1Q1"/>
<dbReference type="FunCoup" id="Q5R1Q1">
    <property type="interactions" value="62"/>
</dbReference>
<dbReference type="STRING" id="9685.ENSFCAP00000059396"/>
<dbReference type="PaxDb" id="9685-ENSFCAP00000010926"/>
<dbReference type="GeneID" id="493936"/>
<dbReference type="KEGG" id="fca:493936"/>
<dbReference type="CTD" id="916"/>
<dbReference type="eggNOG" id="ENOG502S8KB">
    <property type="taxonomic scope" value="Eukaryota"/>
</dbReference>
<dbReference type="InParanoid" id="Q5R1Q1"/>
<dbReference type="OrthoDB" id="9947847at2759"/>
<dbReference type="TreeFam" id="TF335892"/>
<dbReference type="Proteomes" id="UP000011712">
    <property type="component" value="Unplaced"/>
</dbReference>
<dbReference type="GO" id="GO:0042105">
    <property type="term" value="C:alpha-beta T cell receptor complex"/>
    <property type="evidence" value="ECO:0000318"/>
    <property type="project" value="GO_Central"/>
</dbReference>
<dbReference type="GO" id="GO:0009897">
    <property type="term" value="C:external side of plasma membrane"/>
    <property type="evidence" value="ECO:0000318"/>
    <property type="project" value="GO_Central"/>
</dbReference>
<dbReference type="GO" id="GO:0004888">
    <property type="term" value="F:transmembrane signaling receptor activity"/>
    <property type="evidence" value="ECO:0000318"/>
    <property type="project" value="GO_Central"/>
</dbReference>
<dbReference type="GO" id="GO:0002250">
    <property type="term" value="P:adaptive immune response"/>
    <property type="evidence" value="ECO:0007669"/>
    <property type="project" value="UniProtKB-KW"/>
</dbReference>
<dbReference type="GO" id="GO:0007166">
    <property type="term" value="P:cell surface receptor signaling pathway"/>
    <property type="evidence" value="ECO:0000318"/>
    <property type="project" value="GO_Central"/>
</dbReference>
<dbReference type="GO" id="GO:0045059">
    <property type="term" value="P:positive thymic T cell selection"/>
    <property type="evidence" value="ECO:0000318"/>
    <property type="project" value="GO_Central"/>
</dbReference>
<dbReference type="FunFam" id="2.60.40.10:FF:001422">
    <property type="entry name" value="T-cell surface glycoprotein CD3 epsilon chain"/>
    <property type="match status" value="1"/>
</dbReference>
<dbReference type="Gene3D" id="2.60.40.10">
    <property type="entry name" value="Immunoglobulins"/>
    <property type="match status" value="1"/>
</dbReference>
<dbReference type="InterPro" id="IPR015484">
    <property type="entry name" value="CD3_esu/gsu/dsu"/>
</dbReference>
<dbReference type="InterPro" id="IPR007110">
    <property type="entry name" value="Ig-like_dom"/>
</dbReference>
<dbReference type="InterPro" id="IPR036179">
    <property type="entry name" value="Ig-like_dom_sf"/>
</dbReference>
<dbReference type="InterPro" id="IPR013783">
    <property type="entry name" value="Ig-like_fold"/>
</dbReference>
<dbReference type="InterPro" id="IPR003598">
    <property type="entry name" value="Ig_sub2"/>
</dbReference>
<dbReference type="InterPro" id="IPR003110">
    <property type="entry name" value="Phos_immunorcpt_sig_ITAM"/>
</dbReference>
<dbReference type="PANTHER" id="PTHR10570:SF9">
    <property type="entry name" value="T-CELL SURFACE GLYCOPROTEIN CD3 EPSILON CHAIN"/>
    <property type="match status" value="1"/>
</dbReference>
<dbReference type="PANTHER" id="PTHR10570">
    <property type="entry name" value="T-CELL SURFACE GLYCOPROTEIN CD3 GAMMA CHAIN / DELTA CHAIN"/>
    <property type="match status" value="1"/>
</dbReference>
<dbReference type="Pfam" id="PF16681">
    <property type="entry name" value="Ig_5"/>
    <property type="match status" value="1"/>
</dbReference>
<dbReference type="Pfam" id="PF02189">
    <property type="entry name" value="ITAM"/>
    <property type="match status" value="1"/>
</dbReference>
<dbReference type="SMART" id="SM00408">
    <property type="entry name" value="IGc2"/>
    <property type="match status" value="1"/>
</dbReference>
<dbReference type="SMART" id="SM00077">
    <property type="entry name" value="ITAM"/>
    <property type="match status" value="1"/>
</dbReference>
<dbReference type="SUPFAM" id="SSF48726">
    <property type="entry name" value="Immunoglobulin"/>
    <property type="match status" value="1"/>
</dbReference>
<dbReference type="PROSITE" id="PS50835">
    <property type="entry name" value="IG_LIKE"/>
    <property type="match status" value="1"/>
</dbReference>
<dbReference type="PROSITE" id="PS51055">
    <property type="entry name" value="ITAM_1"/>
    <property type="match status" value="1"/>
</dbReference>
<comment type="function">
    <text evidence="1 2">Part of the TCR-CD3 complex present on T-lymphocyte cell surface that plays an essential role in adaptive immune response. When antigen presenting cells (APCs) activate T-cell receptor (TCR), TCR-mediated signals are transmitted across the cell membrane by the CD3 chains CD3D, CD3E, CD3G and CD3Z. All CD3 chains contain immunoreceptor tyrosine-based activation motifs (ITAMs) in their cytoplasmic domain. Upon TCR engagement, these motifs become phosphorylated by Src family protein tyrosine kinases LCK and FYN, resulting in the activation of downstream signaling pathways. In addition of this role of signal transduction in T-cell activation, CD3E plays an essential role in correct T-cell development. Also participates in internalization and cell surface down-regulation of TCR-CD3 complexes via endocytosis sequences present in CD3E cytosolic region (By similarity). In addition to its role as a TCR coreceptor, it serves as a receptor for ITPRIPL1. Ligand recognition inhibits T-cell activation by promoting interaction with NCK1, which prevents CD3E-ZAP70 interaction and blocks the ERK-NFkB signaling cascade and calcium influx (By similarity).</text>
</comment>
<comment type="subunit">
    <text evidence="1 2">The TCR-CD3 complex is composed of a CD3D/CD3E and a CD3G/CD3E heterodimers that preferentially associate with TCRalpha and TCRbeta, respectively, to form TCRalpha/CD3E/CD3G and TCRbeta/CD3G/CD3E trimers. In turn, the hexamer interacts with CD3Z homodimer to form the TCR-CD3 complex. Alternatively, TCRalpha and TCRbeta can be replaced by TCRgamma and TCRdelta. Interacts with CD6. Interacts (via Proline-rich sequence) with NCK1; the interaction is ligand dependent but independent of tyrosine kinase activation.</text>
</comment>
<comment type="subcellular location">
    <subcellularLocation>
        <location evidence="1">Cell membrane</location>
        <topology evidence="1">Single-pass type I membrane protein</topology>
    </subcellularLocation>
</comment>
<comment type="PTM">
    <text evidence="1">Phosphorylated on Tyr residues after T-cell receptor triggering by LCK in association with CD4/CD8.</text>
</comment>
<accession>Q5R1Q1</accession>
<accession>Q5R1Q2</accession>
<evidence type="ECO:0000250" key="1">
    <source>
        <dbReference type="UniProtKB" id="P07766"/>
    </source>
</evidence>
<evidence type="ECO:0000250" key="2">
    <source>
        <dbReference type="UniProtKB" id="P22646"/>
    </source>
</evidence>
<evidence type="ECO:0000255" key="3"/>
<evidence type="ECO:0000255" key="4">
    <source>
        <dbReference type="PROSITE-ProRule" id="PRU00114"/>
    </source>
</evidence>
<evidence type="ECO:0000255" key="5">
    <source>
        <dbReference type="PROSITE-ProRule" id="PRU00379"/>
    </source>
</evidence>
<evidence type="ECO:0000256" key="6">
    <source>
        <dbReference type="SAM" id="MobiDB-lite"/>
    </source>
</evidence>
<sequence length="202" mass="22317">MPSGSLWRVLGLCLLSVGAWGQEDNEDPLEPSPQTSASARYKVSISGTTVVLTCPEDLGSESIKWERNGDLLPNEYGEQLFLDDFSEMENSGYYACYTSNSLEKNYLYLKARVCQNCVEVDTMTAVAIVVADVCITLGFLLLVYYWSKNKKASSVTMMRGPGAGGRPRGQNKEKPPPVPNPDYEPIRKGQQDLYSGLNQRGI</sequence>
<keyword id="KW-1064">Adaptive immunity</keyword>
<keyword id="KW-1003">Cell membrane</keyword>
<keyword id="KW-1015">Disulfide bond</keyword>
<keyword id="KW-0391">Immunity</keyword>
<keyword id="KW-0393">Immunoglobulin domain</keyword>
<keyword id="KW-0472">Membrane</keyword>
<keyword id="KW-0597">Phosphoprotein</keyword>
<keyword id="KW-0675">Receptor</keyword>
<keyword id="KW-1185">Reference proteome</keyword>
<keyword id="KW-0732">Signal</keyword>
<keyword id="KW-0812">Transmembrane</keyword>
<keyword id="KW-1133">Transmembrane helix</keyword>
<gene>
    <name type="primary">CD3E</name>
</gene>
<reference key="1">
    <citation type="journal article" date="1998" name="Vet. Immunol. Immunopathol.">
        <title>Molecular cloning and expression of feline CD3epsilon.</title>
        <authorList>
            <person name="Nishimura Y."/>
            <person name="Miyazawa T."/>
            <person name="Ikeda Y."/>
            <person name="Izumiya Y."/>
            <person name="Nakamura K."/>
            <person name="Cai J."/>
            <person name="Sato E."/>
            <person name="Kohmoto M."/>
            <person name="Mikami T."/>
        </authorList>
    </citation>
    <scope>NUCLEOTIDE SEQUENCE [MRNA]</scope>
</reference>
<protein>
    <recommendedName>
        <fullName>T-cell surface glycoprotein CD3 epsilon chain</fullName>
    </recommendedName>
    <cdAntigenName>CD3e</cdAntigenName>
</protein>
<proteinExistence type="evidence at transcript level"/>
<organism>
    <name type="scientific">Felis catus</name>
    <name type="common">Cat</name>
    <name type="synonym">Felis silvestris catus</name>
    <dbReference type="NCBI Taxonomy" id="9685"/>
    <lineage>
        <taxon>Eukaryota</taxon>
        <taxon>Metazoa</taxon>
        <taxon>Chordata</taxon>
        <taxon>Craniata</taxon>
        <taxon>Vertebrata</taxon>
        <taxon>Euteleostomi</taxon>
        <taxon>Mammalia</taxon>
        <taxon>Eutheria</taxon>
        <taxon>Laurasiatheria</taxon>
        <taxon>Carnivora</taxon>
        <taxon>Feliformia</taxon>
        <taxon>Felidae</taxon>
        <taxon>Felinae</taxon>
        <taxon>Felis</taxon>
    </lineage>
</organism>
<feature type="signal peptide" evidence="3">
    <location>
        <begin position="1"/>
        <end position="21"/>
    </location>
</feature>
<feature type="chain" id="PRO_0000014606" description="T-cell surface glycoprotein CD3 epsilon chain">
    <location>
        <begin position="22"/>
        <end position="202"/>
    </location>
</feature>
<feature type="topological domain" description="Extracellular" evidence="3">
    <location>
        <begin position="22"/>
        <end position="125"/>
    </location>
</feature>
<feature type="transmembrane region" description="Helical" evidence="3">
    <location>
        <begin position="126"/>
        <end position="146"/>
    </location>
</feature>
<feature type="topological domain" description="Cytoplasmic" evidence="3">
    <location>
        <begin position="147"/>
        <end position="202"/>
    </location>
</feature>
<feature type="domain" description="Ig-like">
    <location>
        <begin position="33"/>
        <end position="107"/>
    </location>
</feature>
<feature type="domain" description="ITAM" evidence="5">
    <location>
        <begin position="173"/>
        <end position="200"/>
    </location>
</feature>
<feature type="region of interest" description="Disordered" evidence="6">
    <location>
        <begin position="156"/>
        <end position="202"/>
    </location>
</feature>
<feature type="region of interest" description="NUMB-binding region" evidence="1">
    <location>
        <begin position="170"/>
        <end position="187"/>
    </location>
</feature>
<feature type="region of interest" description="Proline-rich sequence" evidence="1">
    <location>
        <begin position="174"/>
        <end position="181"/>
    </location>
</feature>
<feature type="compositionally biased region" description="Polar residues" evidence="6">
    <location>
        <begin position="192"/>
        <end position="202"/>
    </location>
</feature>
<feature type="modified residue" description="Phosphotyrosine" evidence="1 5">
    <location>
        <position position="183"/>
    </location>
</feature>
<feature type="modified residue" description="Phosphotyrosine" evidence="1 5">
    <location>
        <position position="194"/>
    </location>
</feature>
<feature type="disulfide bond" evidence="4">
    <location>
        <begin position="54"/>
        <end position="96"/>
    </location>
</feature>
<feature type="sequence variant">
    <original>F</original>
    <variation>L</variation>
    <location>
        <position position="139"/>
    </location>
</feature>